<protein>
    <recommendedName>
        <fullName evidence="1">ATP synthase subunit delta</fullName>
    </recommendedName>
    <alternativeName>
        <fullName evidence="1">ATP synthase F(1) sector subunit delta</fullName>
    </alternativeName>
    <alternativeName>
        <fullName evidence="1">F-type ATPase subunit delta</fullName>
        <shortName evidence="1">F-ATPase subunit delta</shortName>
    </alternativeName>
</protein>
<organism>
    <name type="scientific">Leptospira interrogans serogroup Icterohaemorrhagiae serovar copenhageni (strain Fiocruz L1-130)</name>
    <dbReference type="NCBI Taxonomy" id="267671"/>
    <lineage>
        <taxon>Bacteria</taxon>
        <taxon>Pseudomonadati</taxon>
        <taxon>Spirochaetota</taxon>
        <taxon>Spirochaetia</taxon>
        <taxon>Leptospirales</taxon>
        <taxon>Leptospiraceae</taxon>
        <taxon>Leptospira</taxon>
    </lineage>
</organism>
<dbReference type="EMBL" id="AE016823">
    <property type="protein sequence ID" value="AAS69846.1"/>
    <property type="molecule type" value="Genomic_DNA"/>
</dbReference>
<dbReference type="RefSeq" id="WP_000999999.1">
    <property type="nucleotide sequence ID" value="NC_005823.1"/>
</dbReference>
<dbReference type="SMR" id="Q72SY2"/>
<dbReference type="GeneID" id="61144557"/>
<dbReference type="KEGG" id="lic:LIC_11240"/>
<dbReference type="HOGENOM" id="CLU_085114_4_1_12"/>
<dbReference type="Proteomes" id="UP000007037">
    <property type="component" value="Chromosome I"/>
</dbReference>
<dbReference type="GO" id="GO:0005886">
    <property type="term" value="C:plasma membrane"/>
    <property type="evidence" value="ECO:0007669"/>
    <property type="project" value="UniProtKB-SubCell"/>
</dbReference>
<dbReference type="GO" id="GO:0045259">
    <property type="term" value="C:proton-transporting ATP synthase complex"/>
    <property type="evidence" value="ECO:0007669"/>
    <property type="project" value="UniProtKB-KW"/>
</dbReference>
<dbReference type="GO" id="GO:0046933">
    <property type="term" value="F:proton-transporting ATP synthase activity, rotational mechanism"/>
    <property type="evidence" value="ECO:0007669"/>
    <property type="project" value="UniProtKB-UniRule"/>
</dbReference>
<dbReference type="Gene3D" id="1.10.520.20">
    <property type="entry name" value="N-terminal domain of the delta subunit of the F1F0-ATP synthase"/>
    <property type="match status" value="1"/>
</dbReference>
<dbReference type="HAMAP" id="MF_01416">
    <property type="entry name" value="ATP_synth_delta_bact"/>
    <property type="match status" value="1"/>
</dbReference>
<dbReference type="InterPro" id="IPR026015">
    <property type="entry name" value="ATP_synth_OSCP/delta_N_sf"/>
</dbReference>
<dbReference type="InterPro" id="IPR000711">
    <property type="entry name" value="ATPase_OSCP/dsu"/>
</dbReference>
<dbReference type="NCBIfam" id="TIGR01145">
    <property type="entry name" value="ATP_synt_delta"/>
    <property type="match status" value="1"/>
</dbReference>
<dbReference type="NCBIfam" id="NF009969">
    <property type="entry name" value="PRK13434.1"/>
    <property type="match status" value="1"/>
</dbReference>
<dbReference type="PANTHER" id="PTHR11910">
    <property type="entry name" value="ATP SYNTHASE DELTA CHAIN"/>
    <property type="match status" value="1"/>
</dbReference>
<dbReference type="Pfam" id="PF00213">
    <property type="entry name" value="OSCP"/>
    <property type="match status" value="1"/>
</dbReference>
<dbReference type="PRINTS" id="PR00125">
    <property type="entry name" value="ATPASEDELTA"/>
</dbReference>
<dbReference type="SUPFAM" id="SSF47928">
    <property type="entry name" value="N-terminal domain of the delta subunit of the F1F0-ATP synthase"/>
    <property type="match status" value="1"/>
</dbReference>
<accession>Q72SY2</accession>
<proteinExistence type="inferred from homology"/>
<gene>
    <name evidence="1" type="primary">atpH</name>
    <name type="ordered locus">LIC_11240</name>
</gene>
<feature type="chain" id="PRO_1000184744" description="ATP synthase subunit delta">
    <location>
        <begin position="1"/>
        <end position="186"/>
    </location>
</feature>
<keyword id="KW-0066">ATP synthesis</keyword>
<keyword id="KW-0997">Cell inner membrane</keyword>
<keyword id="KW-1003">Cell membrane</keyword>
<keyword id="KW-0139">CF(1)</keyword>
<keyword id="KW-0375">Hydrogen ion transport</keyword>
<keyword id="KW-0406">Ion transport</keyword>
<keyword id="KW-0472">Membrane</keyword>
<keyword id="KW-0813">Transport</keyword>
<reference key="1">
    <citation type="journal article" date="2004" name="J. Bacteriol.">
        <title>Comparative genomics of two Leptospira interrogans serovars reveals novel insights into physiology and pathogenesis.</title>
        <authorList>
            <person name="Nascimento A.L.T.O."/>
            <person name="Ko A.I."/>
            <person name="Martins E.A.L."/>
            <person name="Monteiro-Vitorello C.B."/>
            <person name="Ho P.L."/>
            <person name="Haake D.A."/>
            <person name="Verjovski-Almeida S."/>
            <person name="Hartskeerl R.A."/>
            <person name="Marques M.V."/>
            <person name="Oliveira M.C."/>
            <person name="Menck C.F.M."/>
            <person name="Leite L.C.C."/>
            <person name="Carrer H."/>
            <person name="Coutinho L.L."/>
            <person name="Degrave W.M."/>
            <person name="Dellagostin O.A."/>
            <person name="El-Dorry H."/>
            <person name="Ferro E.S."/>
            <person name="Ferro M.I.T."/>
            <person name="Furlan L.R."/>
            <person name="Gamberini M."/>
            <person name="Giglioti E.A."/>
            <person name="Goes-Neto A."/>
            <person name="Goldman G.H."/>
            <person name="Goldman M.H.S."/>
            <person name="Harakava R."/>
            <person name="Jeronimo S.M.B."/>
            <person name="Junqueira-de-Azevedo I.L.M."/>
            <person name="Kimura E.T."/>
            <person name="Kuramae E.E."/>
            <person name="Lemos E.G.M."/>
            <person name="Lemos M.V.F."/>
            <person name="Marino C.L."/>
            <person name="Nunes L.R."/>
            <person name="de Oliveira R.C."/>
            <person name="Pereira G.G."/>
            <person name="Reis M.S."/>
            <person name="Schriefer A."/>
            <person name="Siqueira W.J."/>
            <person name="Sommer P."/>
            <person name="Tsai S.M."/>
            <person name="Simpson A.J.G."/>
            <person name="Ferro J.A."/>
            <person name="Camargo L.E.A."/>
            <person name="Kitajima J.P."/>
            <person name="Setubal J.C."/>
            <person name="Van Sluys M.A."/>
        </authorList>
    </citation>
    <scope>NUCLEOTIDE SEQUENCE [LARGE SCALE GENOMIC DNA]</scope>
    <source>
        <strain>Fiocruz L1-130</strain>
    </source>
</reference>
<evidence type="ECO:0000255" key="1">
    <source>
        <dbReference type="HAMAP-Rule" id="MF_01416"/>
    </source>
</evidence>
<comment type="function">
    <text evidence="1">F(1)F(0) ATP synthase produces ATP from ADP in the presence of a proton or sodium gradient. F-type ATPases consist of two structural domains, F(1) containing the extramembraneous catalytic core and F(0) containing the membrane proton channel, linked together by a central stalk and a peripheral stalk. During catalysis, ATP synthesis in the catalytic domain of F(1) is coupled via a rotary mechanism of the central stalk subunits to proton translocation.</text>
</comment>
<comment type="function">
    <text evidence="1">This protein is part of the stalk that links CF(0) to CF(1). It either transmits conformational changes from CF(0) to CF(1) or is implicated in proton conduction.</text>
</comment>
<comment type="subunit">
    <text evidence="1">F-type ATPases have 2 components, F(1) - the catalytic core - and F(0) - the membrane proton channel. F(1) has five subunits: alpha(3), beta(3), gamma(1), delta(1), epsilon(1). F(0) has three main subunits: a(1), b(2) and c(10-14). The alpha and beta chains form an alternating ring which encloses part of the gamma chain. F(1) is attached to F(0) by a central stalk formed by the gamma and epsilon chains, while a peripheral stalk is formed by the delta and b chains.</text>
</comment>
<comment type="subcellular location">
    <subcellularLocation>
        <location evidence="1">Cell inner membrane</location>
        <topology evidence="1">Peripheral membrane protein</topology>
    </subcellularLocation>
</comment>
<comment type="similarity">
    <text evidence="1">Belongs to the ATPase delta chain family.</text>
</comment>
<name>ATPD_LEPIC</name>
<sequence length="186" mass="20751">MNDSGVSKTYASALLGATNVPEEVEQELGDLAQLLFKDEKVKNFFLSPTVSNEEKEKVLIKNLRGKISDITLNFLGVLLNRGRIIHLPEIQKQFTVELDKKKGRVRAQVRSYPSLEPAQAAKLGSILSEKFKSEFILEVSEDKSLLGGFVVQFNDLKIEKSIASQLGEIKKSMLEKKLPVGAIYEN</sequence>